<comment type="function">
    <text evidence="1">Catalyzes the transfer of the enolpyruvyl moiety of phosphoenolpyruvate (PEP) to the 5-hydroxyl of shikimate-3-phosphate (S3P) to produce enolpyruvyl shikimate-3-phosphate and inorganic phosphate.</text>
</comment>
<comment type="catalytic activity">
    <reaction evidence="1">
        <text>3-phosphoshikimate + phosphoenolpyruvate = 5-O-(1-carboxyvinyl)-3-phosphoshikimate + phosphate</text>
        <dbReference type="Rhea" id="RHEA:21256"/>
        <dbReference type="ChEBI" id="CHEBI:43474"/>
        <dbReference type="ChEBI" id="CHEBI:57701"/>
        <dbReference type="ChEBI" id="CHEBI:58702"/>
        <dbReference type="ChEBI" id="CHEBI:145989"/>
        <dbReference type="EC" id="2.5.1.19"/>
    </reaction>
    <physiologicalReaction direction="left-to-right" evidence="1">
        <dbReference type="Rhea" id="RHEA:21257"/>
    </physiologicalReaction>
</comment>
<comment type="pathway">
    <text evidence="1">Metabolic intermediate biosynthesis; chorismate biosynthesis; chorismate from D-erythrose 4-phosphate and phosphoenolpyruvate: step 6/7.</text>
</comment>
<comment type="subunit">
    <text evidence="1">Monomer.</text>
</comment>
<comment type="subcellular location">
    <subcellularLocation>
        <location evidence="1">Cytoplasm</location>
    </subcellularLocation>
</comment>
<comment type="similarity">
    <text evidence="1 2">Belongs to the EPSP synthase family.</text>
</comment>
<protein>
    <recommendedName>
        <fullName evidence="1">3-phosphoshikimate 1-carboxyvinyltransferase</fullName>
        <ecNumber evidence="1">2.5.1.19</ecNumber>
    </recommendedName>
    <alternativeName>
        <fullName evidence="1">5-enolpyruvylshikimate-3-phosphate synthase</fullName>
        <shortName evidence="1">EPSP synthase</shortName>
        <shortName evidence="1">EPSPS</shortName>
    </alternativeName>
</protein>
<evidence type="ECO:0000255" key="1">
    <source>
        <dbReference type="HAMAP-Rule" id="MF_00210"/>
    </source>
</evidence>
<evidence type="ECO:0000305" key="2"/>
<gene>
    <name evidence="1" type="primary">aroA</name>
    <name type="ordered locus">BPSL0683</name>
</gene>
<name>AROA_BURPS</name>
<sequence length="451" mass="48627">MTTSDRLQPSFVEVKNTSTLSGTIDLPASKSSSTRALLTAALTPGISTIRNVATGFNSNAMKHNCERLGASFSSEGDTTVVKGVDVMHVDREIVFDPGNSGVVLRLLMGVAGYLPDTRFVTQYRYSLGVRSQAEMVAALRRLNVECEAVGPEARLPISMRSTRALGKHTEVSCKKSSQFLSGLLYLGAIGERDLEIDVVDHITAPSMVHTTINNLAHAGVAVEYDAAFRRFFVPGRDRFKPSEFTVGADPASTAAILALCGSLASDVTLNGFFEEELGSGAVIRYLTDTGTLIDELPGNRIRIRGGASIRAQDFDGSLAPDAVPALAGRAAFAEGTSTFYNIEHIRYKESDRISDFRRELDKLGVRSEEKLDQLIIHGNPRSYRGGAVVDGHYDHGLIMALTTIGLHCEHPVLIKEPHHVGQTYPDYFADIGSIGANVDGLIYPNVAAARA</sequence>
<accession>Q63X54</accession>
<dbReference type="EC" id="2.5.1.19" evidence="1"/>
<dbReference type="EMBL" id="BX571965">
    <property type="protein sequence ID" value="CAH34676.1"/>
    <property type="molecule type" value="Genomic_DNA"/>
</dbReference>
<dbReference type="RefSeq" id="WP_004550856.1">
    <property type="nucleotide sequence ID" value="NZ_CP009538.1"/>
</dbReference>
<dbReference type="RefSeq" id="YP_107312.1">
    <property type="nucleotide sequence ID" value="NC_006350.1"/>
</dbReference>
<dbReference type="SMR" id="Q63X54"/>
<dbReference type="STRING" id="272560.BPSL0683"/>
<dbReference type="KEGG" id="bps:BPSL0683"/>
<dbReference type="PATRIC" id="fig|272560.51.peg.935"/>
<dbReference type="eggNOG" id="COG0128">
    <property type="taxonomic scope" value="Bacteria"/>
</dbReference>
<dbReference type="UniPathway" id="UPA00053">
    <property type="reaction ID" value="UER00089"/>
</dbReference>
<dbReference type="Proteomes" id="UP000000605">
    <property type="component" value="Chromosome 1"/>
</dbReference>
<dbReference type="GO" id="GO:0005737">
    <property type="term" value="C:cytoplasm"/>
    <property type="evidence" value="ECO:0007669"/>
    <property type="project" value="UniProtKB-SubCell"/>
</dbReference>
<dbReference type="GO" id="GO:0003866">
    <property type="term" value="F:3-phosphoshikimate 1-carboxyvinyltransferase activity"/>
    <property type="evidence" value="ECO:0007669"/>
    <property type="project" value="UniProtKB-UniRule"/>
</dbReference>
<dbReference type="GO" id="GO:0008652">
    <property type="term" value="P:amino acid biosynthetic process"/>
    <property type="evidence" value="ECO:0007669"/>
    <property type="project" value="UniProtKB-KW"/>
</dbReference>
<dbReference type="GO" id="GO:0009073">
    <property type="term" value="P:aromatic amino acid family biosynthetic process"/>
    <property type="evidence" value="ECO:0007669"/>
    <property type="project" value="UniProtKB-KW"/>
</dbReference>
<dbReference type="GO" id="GO:0009423">
    <property type="term" value="P:chorismate biosynthetic process"/>
    <property type="evidence" value="ECO:0007669"/>
    <property type="project" value="UniProtKB-UniRule"/>
</dbReference>
<dbReference type="CDD" id="cd01556">
    <property type="entry name" value="EPSP_synthase"/>
    <property type="match status" value="1"/>
</dbReference>
<dbReference type="Gene3D" id="3.65.10.10">
    <property type="entry name" value="Enolpyruvate transferase domain"/>
    <property type="match status" value="2"/>
</dbReference>
<dbReference type="HAMAP" id="MF_00210">
    <property type="entry name" value="EPSP_synth"/>
    <property type="match status" value="1"/>
</dbReference>
<dbReference type="InterPro" id="IPR001986">
    <property type="entry name" value="Enolpyruvate_Tfrase_dom"/>
</dbReference>
<dbReference type="InterPro" id="IPR036968">
    <property type="entry name" value="Enolpyruvate_Tfrase_sf"/>
</dbReference>
<dbReference type="InterPro" id="IPR006264">
    <property type="entry name" value="EPSP_synthase"/>
</dbReference>
<dbReference type="InterPro" id="IPR023193">
    <property type="entry name" value="EPSP_synthase_CS"/>
</dbReference>
<dbReference type="InterPro" id="IPR013792">
    <property type="entry name" value="RNA3'P_cycl/enolpyr_Trfase_a/b"/>
</dbReference>
<dbReference type="NCBIfam" id="TIGR01356">
    <property type="entry name" value="aroA"/>
    <property type="match status" value="1"/>
</dbReference>
<dbReference type="PANTHER" id="PTHR21090">
    <property type="entry name" value="AROM/DEHYDROQUINATE SYNTHASE"/>
    <property type="match status" value="1"/>
</dbReference>
<dbReference type="PANTHER" id="PTHR21090:SF5">
    <property type="entry name" value="PENTAFUNCTIONAL AROM POLYPEPTIDE"/>
    <property type="match status" value="1"/>
</dbReference>
<dbReference type="Pfam" id="PF00275">
    <property type="entry name" value="EPSP_synthase"/>
    <property type="match status" value="1"/>
</dbReference>
<dbReference type="PIRSF" id="PIRSF000505">
    <property type="entry name" value="EPSPS"/>
    <property type="match status" value="1"/>
</dbReference>
<dbReference type="SUPFAM" id="SSF55205">
    <property type="entry name" value="EPT/RTPC-like"/>
    <property type="match status" value="1"/>
</dbReference>
<dbReference type="PROSITE" id="PS00885">
    <property type="entry name" value="EPSP_SYNTHASE_2"/>
    <property type="match status" value="1"/>
</dbReference>
<feature type="chain" id="PRO_0000088238" description="3-phosphoshikimate 1-carboxyvinyltransferase">
    <location>
        <begin position="1"/>
        <end position="451"/>
    </location>
</feature>
<feature type="active site" description="Proton acceptor" evidence="1">
    <location>
        <position position="321"/>
    </location>
</feature>
<feature type="binding site" evidence="1">
    <location>
        <position position="30"/>
    </location>
    <ligand>
        <name>3-phosphoshikimate</name>
        <dbReference type="ChEBI" id="CHEBI:145989"/>
    </ligand>
</feature>
<feature type="binding site" evidence="1">
    <location>
        <position position="30"/>
    </location>
    <ligand>
        <name>phosphoenolpyruvate</name>
        <dbReference type="ChEBI" id="CHEBI:58702"/>
    </ligand>
</feature>
<feature type="binding site" evidence="1">
    <location>
        <position position="31"/>
    </location>
    <ligand>
        <name>3-phosphoshikimate</name>
        <dbReference type="ChEBI" id="CHEBI:145989"/>
    </ligand>
</feature>
<feature type="binding site" evidence="1">
    <location>
        <position position="35"/>
    </location>
    <ligand>
        <name>3-phosphoshikimate</name>
        <dbReference type="ChEBI" id="CHEBI:145989"/>
    </ligand>
</feature>
<feature type="binding site" evidence="1">
    <location>
        <position position="101"/>
    </location>
    <ligand>
        <name>phosphoenolpyruvate</name>
        <dbReference type="ChEBI" id="CHEBI:58702"/>
    </ligand>
</feature>
<feature type="binding site" evidence="1">
    <location>
        <position position="130"/>
    </location>
    <ligand>
        <name>phosphoenolpyruvate</name>
        <dbReference type="ChEBI" id="CHEBI:58702"/>
    </ligand>
</feature>
<feature type="binding site" evidence="1">
    <location>
        <position position="176"/>
    </location>
    <ligand>
        <name>3-phosphoshikimate</name>
        <dbReference type="ChEBI" id="CHEBI:145989"/>
    </ligand>
</feature>
<feature type="binding site" evidence="1">
    <location>
        <position position="177"/>
    </location>
    <ligand>
        <name>3-phosphoshikimate</name>
        <dbReference type="ChEBI" id="CHEBI:145989"/>
    </ligand>
</feature>
<feature type="binding site" evidence="1">
    <location>
        <position position="178"/>
    </location>
    <ligand>
        <name>3-phosphoshikimate</name>
        <dbReference type="ChEBI" id="CHEBI:145989"/>
    </ligand>
</feature>
<feature type="binding site" evidence="1">
    <location>
        <position position="178"/>
    </location>
    <ligand>
        <name>phosphoenolpyruvate</name>
        <dbReference type="ChEBI" id="CHEBI:58702"/>
    </ligand>
</feature>
<feature type="binding site" evidence="1">
    <location>
        <position position="321"/>
    </location>
    <ligand>
        <name>3-phosphoshikimate</name>
        <dbReference type="ChEBI" id="CHEBI:145989"/>
    </ligand>
</feature>
<feature type="binding site" evidence="1">
    <location>
        <position position="348"/>
    </location>
    <ligand>
        <name>3-phosphoshikimate</name>
        <dbReference type="ChEBI" id="CHEBI:145989"/>
    </ligand>
</feature>
<feature type="binding site" evidence="1">
    <location>
        <position position="352"/>
    </location>
    <ligand>
        <name>phosphoenolpyruvate</name>
        <dbReference type="ChEBI" id="CHEBI:58702"/>
    </ligand>
</feature>
<feature type="binding site" evidence="1">
    <location>
        <position position="422"/>
    </location>
    <ligand>
        <name>phosphoenolpyruvate</name>
        <dbReference type="ChEBI" id="CHEBI:58702"/>
    </ligand>
</feature>
<keyword id="KW-0028">Amino-acid biosynthesis</keyword>
<keyword id="KW-0057">Aromatic amino acid biosynthesis</keyword>
<keyword id="KW-0963">Cytoplasm</keyword>
<keyword id="KW-1185">Reference proteome</keyword>
<keyword id="KW-0808">Transferase</keyword>
<reference key="1">
    <citation type="journal article" date="2004" name="Proc. Natl. Acad. Sci. U.S.A.">
        <title>Genomic plasticity of the causative agent of melioidosis, Burkholderia pseudomallei.</title>
        <authorList>
            <person name="Holden M.T.G."/>
            <person name="Titball R.W."/>
            <person name="Peacock S.J."/>
            <person name="Cerdeno-Tarraga A.-M."/>
            <person name="Atkins T."/>
            <person name="Crossman L.C."/>
            <person name="Pitt T."/>
            <person name="Churcher C."/>
            <person name="Mungall K.L."/>
            <person name="Bentley S.D."/>
            <person name="Sebaihia M."/>
            <person name="Thomson N.R."/>
            <person name="Bason N."/>
            <person name="Beacham I.R."/>
            <person name="Brooks K."/>
            <person name="Brown K.A."/>
            <person name="Brown N.F."/>
            <person name="Challis G.L."/>
            <person name="Cherevach I."/>
            <person name="Chillingworth T."/>
            <person name="Cronin A."/>
            <person name="Crossett B."/>
            <person name="Davis P."/>
            <person name="DeShazer D."/>
            <person name="Feltwell T."/>
            <person name="Fraser A."/>
            <person name="Hance Z."/>
            <person name="Hauser H."/>
            <person name="Holroyd S."/>
            <person name="Jagels K."/>
            <person name="Keith K.E."/>
            <person name="Maddison M."/>
            <person name="Moule S."/>
            <person name="Price C."/>
            <person name="Quail M.A."/>
            <person name="Rabbinowitsch E."/>
            <person name="Rutherford K."/>
            <person name="Sanders M."/>
            <person name="Simmonds M."/>
            <person name="Songsivilai S."/>
            <person name="Stevens K."/>
            <person name="Tumapa S."/>
            <person name="Vesaratchavest M."/>
            <person name="Whitehead S."/>
            <person name="Yeats C."/>
            <person name="Barrell B.G."/>
            <person name="Oyston P.C.F."/>
            <person name="Parkhill J."/>
        </authorList>
    </citation>
    <scope>NUCLEOTIDE SEQUENCE [LARGE SCALE GENOMIC DNA]</scope>
    <source>
        <strain>K96243</strain>
    </source>
</reference>
<organism>
    <name type="scientific">Burkholderia pseudomallei (strain K96243)</name>
    <dbReference type="NCBI Taxonomy" id="272560"/>
    <lineage>
        <taxon>Bacteria</taxon>
        <taxon>Pseudomonadati</taxon>
        <taxon>Pseudomonadota</taxon>
        <taxon>Betaproteobacteria</taxon>
        <taxon>Burkholderiales</taxon>
        <taxon>Burkholderiaceae</taxon>
        <taxon>Burkholderia</taxon>
        <taxon>pseudomallei group</taxon>
    </lineage>
</organism>
<proteinExistence type="inferred from homology"/>